<sequence>MVSETTTNRSTVKISNVPQTIVADELLRFLELHLGEDTVFALEIPTTRDNWKPRDFARVQFTTLEVKSRAQLLSSQSKLLFKTHNLRLSEAYDDIIPRPVDPRKRLDDIVLTVGFPESDEKRFCALEKWDGVRCWILTEKRRVEFWVWESGDCYKIEVRFEDIIETLSCCVNGDASEIDAFLLKLKYGPKVFKRVTVHIATKFKSDRYRFCKEDFDFMWIRTTDFSGSKSIGTSTCFCLEVHNGSTMLDIFSGLPYYREDTLSLTYVDGKTFASAAQIVPLLNAAILGLEFPYEILFQLNALVHAQKISLFAASDMELIKILRGMSLETALVILKKLHQQSSICYDPVFFVKTQMQSVVKKMKHSPASAYKRLTEQNIMSCQRAYVTPSKIYLLGPELETANYVVKNFAEHVSDFMRVTFVEEDWSKLPANALSVNSKEGYFVKPSRTNIYNRVLSILGEGITVGPKRFEFLAFSASQLRGNSVWMFASNEKVKAEDIREWMGCFRKIRSISKCAARMGQLFSASRQTLIVRAQDVEQIPDIEVTTDGADYCFSDGIGKISLAFAKQVAQKCGLSHVPSAFQIRYGGYKGVIAVDRSSFRKLSLRDSMLKFDSNNRMLNVTRWTESMPCFLNREIICLLSTLGIEDAMFEAMQAVHLSMLGNMLEDRDAALNVLQKLSGENSKNLLVKMLLQGYAPSSEPYLSMMLRVHHESQLSELKSRCRILVPKGRILIGCMDEMGILEYGQVYVRVTLTKAELKSRDQSYFRKIDEETSVVIGKVVVTKNPCLHPGDIRVLDAIYEVHFEEKGYLDCIIFPQKGERPHPNECSGGDLDGDQFFVSWDEKIIPSEMDPPMDYAGSRPRLMDHDVTLEEIHKFFVDYMISDTLGVISTAHLVHADRDPEKARSQKCLELANLHSRAVDFAKTGAPAEMPYALKPREFPDFLERFEKPTYISESVFGKLYRAVKSSLAQRKPEAESEDTVAYDVTLEEAGFESFIETAKAHRDMYGEKLTSLMIYYGAANEEEILTGILKTKEMYLARDNRRYGDMKDRITLSVKDLHKEAMGWFEKSCEDEQQKKKLASAWYYVTYNPNHRDEKLTFLSFPWIVGDVLLDIKAENAQRQSVEEKTSGLVSI</sequence>
<keyword id="KW-0002">3D-structure</keyword>
<keyword id="KW-0460">Magnesium</keyword>
<keyword id="KW-0479">Metal-binding</keyword>
<keyword id="KW-0548">Nucleotidyltransferase</keyword>
<keyword id="KW-0539">Nucleus</keyword>
<keyword id="KW-1185">Reference proteome</keyword>
<keyword id="KW-0694">RNA-binding</keyword>
<keyword id="KW-0696">RNA-directed RNA polymerase</keyword>
<keyword id="KW-0943">RNA-mediated gene silencing</keyword>
<keyword id="KW-0808">Transferase</keyword>
<accession>O82504</accession>
<gene>
    <name evidence="16 17" type="primary">RDR2</name>
    <name evidence="16 17" type="synonym">RDRP2</name>
    <name type="synonym">SMD1</name>
    <name evidence="20" type="ordered locus">At4g11130</name>
    <name evidence="21" type="ORF">F2P3.11</name>
</gene>
<name>RDR2_ARATH</name>
<reference key="1">
    <citation type="journal article" date="1999" name="Nature">
        <title>Sequence and analysis of chromosome 4 of the plant Arabidopsis thaliana.</title>
        <authorList>
            <person name="Mayer K.F.X."/>
            <person name="Schueller C."/>
            <person name="Wambutt R."/>
            <person name="Murphy G."/>
            <person name="Volckaert G."/>
            <person name="Pohl T."/>
            <person name="Duesterhoeft A."/>
            <person name="Stiekema W."/>
            <person name="Entian K.-D."/>
            <person name="Terryn N."/>
            <person name="Harris B."/>
            <person name="Ansorge W."/>
            <person name="Brandt P."/>
            <person name="Grivell L.A."/>
            <person name="Rieger M."/>
            <person name="Weichselgartner M."/>
            <person name="de Simone V."/>
            <person name="Obermaier B."/>
            <person name="Mache R."/>
            <person name="Mueller M."/>
            <person name="Kreis M."/>
            <person name="Delseny M."/>
            <person name="Puigdomenech P."/>
            <person name="Watson M."/>
            <person name="Schmidtheini T."/>
            <person name="Reichert B."/>
            <person name="Portetelle D."/>
            <person name="Perez-Alonso M."/>
            <person name="Boutry M."/>
            <person name="Bancroft I."/>
            <person name="Vos P."/>
            <person name="Hoheisel J."/>
            <person name="Zimmermann W."/>
            <person name="Wedler H."/>
            <person name="Ridley P."/>
            <person name="Langham S.-A."/>
            <person name="McCullagh B."/>
            <person name="Bilham L."/>
            <person name="Robben J."/>
            <person name="van der Schueren J."/>
            <person name="Grymonprez B."/>
            <person name="Chuang Y.-J."/>
            <person name="Vandenbussche F."/>
            <person name="Braeken M."/>
            <person name="Weltjens I."/>
            <person name="Voet M."/>
            <person name="Bastiaens I."/>
            <person name="Aert R."/>
            <person name="Defoor E."/>
            <person name="Weitzenegger T."/>
            <person name="Bothe G."/>
            <person name="Ramsperger U."/>
            <person name="Hilbert H."/>
            <person name="Braun M."/>
            <person name="Holzer E."/>
            <person name="Brandt A."/>
            <person name="Peters S."/>
            <person name="van Staveren M."/>
            <person name="Dirkse W."/>
            <person name="Mooijman P."/>
            <person name="Klein Lankhorst R."/>
            <person name="Rose M."/>
            <person name="Hauf J."/>
            <person name="Koetter P."/>
            <person name="Berneiser S."/>
            <person name="Hempel S."/>
            <person name="Feldpausch M."/>
            <person name="Lamberth S."/>
            <person name="Van den Daele H."/>
            <person name="De Keyser A."/>
            <person name="Buysshaert C."/>
            <person name="Gielen J."/>
            <person name="Villarroel R."/>
            <person name="De Clercq R."/>
            <person name="van Montagu M."/>
            <person name="Rogers J."/>
            <person name="Cronin A."/>
            <person name="Quail M.A."/>
            <person name="Bray-Allen S."/>
            <person name="Clark L."/>
            <person name="Doggett J."/>
            <person name="Hall S."/>
            <person name="Kay M."/>
            <person name="Lennard N."/>
            <person name="McLay K."/>
            <person name="Mayes R."/>
            <person name="Pettett A."/>
            <person name="Rajandream M.A."/>
            <person name="Lyne M."/>
            <person name="Benes V."/>
            <person name="Rechmann S."/>
            <person name="Borkova D."/>
            <person name="Bloecker H."/>
            <person name="Scharfe M."/>
            <person name="Grimm M."/>
            <person name="Loehnert T.-H."/>
            <person name="Dose S."/>
            <person name="de Haan M."/>
            <person name="Maarse A.C."/>
            <person name="Schaefer M."/>
            <person name="Mueller-Auer S."/>
            <person name="Gabel C."/>
            <person name="Fuchs M."/>
            <person name="Fartmann B."/>
            <person name="Granderath K."/>
            <person name="Dauner D."/>
            <person name="Herzl A."/>
            <person name="Neumann S."/>
            <person name="Argiriou A."/>
            <person name="Vitale D."/>
            <person name="Liguori R."/>
            <person name="Piravandi E."/>
            <person name="Massenet O."/>
            <person name="Quigley F."/>
            <person name="Clabauld G."/>
            <person name="Muendlein A."/>
            <person name="Felber R."/>
            <person name="Schnabl S."/>
            <person name="Hiller R."/>
            <person name="Schmidt W."/>
            <person name="Lecharny A."/>
            <person name="Aubourg S."/>
            <person name="Chefdor F."/>
            <person name="Cooke R."/>
            <person name="Berger C."/>
            <person name="Monfort A."/>
            <person name="Casacuberta E."/>
            <person name="Gibbons T."/>
            <person name="Weber N."/>
            <person name="Vandenbol M."/>
            <person name="Bargues M."/>
            <person name="Terol J."/>
            <person name="Torres A."/>
            <person name="Perez-Perez A."/>
            <person name="Purnelle B."/>
            <person name="Bent E."/>
            <person name="Johnson S."/>
            <person name="Tacon D."/>
            <person name="Jesse T."/>
            <person name="Heijnen L."/>
            <person name="Schwarz S."/>
            <person name="Scholler P."/>
            <person name="Heber S."/>
            <person name="Francs P."/>
            <person name="Bielke C."/>
            <person name="Frishman D."/>
            <person name="Haase D."/>
            <person name="Lemcke K."/>
            <person name="Mewes H.-W."/>
            <person name="Stocker S."/>
            <person name="Zaccaria P."/>
            <person name="Bevan M."/>
            <person name="Wilson R.K."/>
            <person name="de la Bastide M."/>
            <person name="Habermann K."/>
            <person name="Parnell L."/>
            <person name="Dedhia N."/>
            <person name="Gnoj L."/>
            <person name="Schutz K."/>
            <person name="Huang E."/>
            <person name="Spiegel L."/>
            <person name="Sekhon M."/>
            <person name="Murray J."/>
            <person name="Sheet P."/>
            <person name="Cordes M."/>
            <person name="Abu-Threideh J."/>
            <person name="Stoneking T."/>
            <person name="Kalicki J."/>
            <person name="Graves T."/>
            <person name="Harmon G."/>
            <person name="Edwards J."/>
            <person name="Latreille P."/>
            <person name="Courtney L."/>
            <person name="Cloud J."/>
            <person name="Abbott A."/>
            <person name="Scott K."/>
            <person name="Johnson D."/>
            <person name="Minx P."/>
            <person name="Bentley D."/>
            <person name="Fulton B."/>
            <person name="Miller N."/>
            <person name="Greco T."/>
            <person name="Kemp K."/>
            <person name="Kramer J."/>
            <person name="Fulton L."/>
            <person name="Mardis E."/>
            <person name="Dante M."/>
            <person name="Pepin K."/>
            <person name="Hillier L.W."/>
            <person name="Nelson J."/>
            <person name="Spieth J."/>
            <person name="Ryan E."/>
            <person name="Andrews S."/>
            <person name="Geisel C."/>
            <person name="Layman D."/>
            <person name="Du H."/>
            <person name="Ali J."/>
            <person name="Berghoff A."/>
            <person name="Jones K."/>
            <person name="Drone K."/>
            <person name="Cotton M."/>
            <person name="Joshu C."/>
            <person name="Antonoiu B."/>
            <person name="Zidanic M."/>
            <person name="Strong C."/>
            <person name="Sun H."/>
            <person name="Lamar B."/>
            <person name="Yordan C."/>
            <person name="Ma P."/>
            <person name="Zhong J."/>
            <person name="Preston R."/>
            <person name="Vil D."/>
            <person name="Shekher M."/>
            <person name="Matero A."/>
            <person name="Shah R."/>
            <person name="Swaby I.K."/>
            <person name="O'Shaughnessy A."/>
            <person name="Rodriguez M."/>
            <person name="Hoffman J."/>
            <person name="Till S."/>
            <person name="Granat S."/>
            <person name="Shohdy N."/>
            <person name="Hasegawa A."/>
            <person name="Hameed A."/>
            <person name="Lodhi M."/>
            <person name="Johnson A."/>
            <person name="Chen E."/>
            <person name="Marra M.A."/>
            <person name="Martienssen R."/>
            <person name="McCombie W.R."/>
        </authorList>
    </citation>
    <scope>NUCLEOTIDE SEQUENCE [LARGE SCALE GENOMIC DNA]</scope>
    <source>
        <strain>cv. Columbia</strain>
    </source>
</reference>
<reference key="2">
    <citation type="journal article" date="2017" name="Plant J.">
        <title>Araport11: a complete reannotation of the Arabidopsis thaliana reference genome.</title>
        <authorList>
            <person name="Cheng C.Y."/>
            <person name="Krishnakumar V."/>
            <person name="Chan A.P."/>
            <person name="Thibaud-Nissen F."/>
            <person name="Schobel S."/>
            <person name="Town C.D."/>
        </authorList>
    </citation>
    <scope>GENOME REANNOTATION</scope>
    <source>
        <strain>cv. Columbia</strain>
    </source>
</reference>
<reference key="3">
    <citation type="journal article" date="2004" name="PLoS Biol.">
        <title>Genetic and functional diversification of small RNA pathways in plants.</title>
        <authorList>
            <person name="Xie Z."/>
            <person name="Johansen L.K."/>
            <person name="Gustafson A.M."/>
            <person name="Kasschau K.D."/>
            <person name="Lellis A.D."/>
            <person name="Zilberman D."/>
            <person name="Jacobsen S.E."/>
            <person name="Carrington J.C."/>
        </authorList>
    </citation>
    <scope>FUNCTION</scope>
</reference>
<reference key="4">
    <citation type="journal article" date="2005" name="Science">
        <title>RNA polymerase IV directs silencing of endogenous DNA.</title>
        <authorList>
            <person name="Herr A.J."/>
            <person name="Jensen M.B."/>
            <person name="Dalmay T."/>
            <person name="Baulcombe D.C."/>
        </authorList>
    </citation>
    <scope>FUNCTION</scope>
</reference>
<reference key="5">
    <citation type="journal article" date="2006" name="Cell">
        <title>The Arabidopsis chromatin-modifying nuclear siRNA pathway involves a nucleolar RNA processing center.</title>
        <authorList>
            <person name="Pontes O."/>
            <person name="Li C.F."/>
            <person name="Nunes P.C."/>
            <person name="Haag J."/>
            <person name="Ream T."/>
            <person name="Vitins A."/>
            <person name="Jacobsen S.E."/>
            <person name="Pikaard C.S."/>
        </authorList>
    </citation>
    <scope>SUBCELLULAR LOCATION</scope>
</reference>
<reference key="6">
    <citation type="journal article" date="2006" name="Plant Cell">
        <title>MicroRNA-targeted and small interfering RNA-mediated mRNA degradation is regulated by argonaute, dicer, and RNA-dependent RNA polymerase in Arabidopsis.</title>
        <authorList>
            <person name="Ronemus M."/>
            <person name="Vaughn M.W."/>
            <person name="Martienssen R.A."/>
        </authorList>
    </citation>
    <scope>FUNCTION</scope>
</reference>
<reference key="7">
    <citation type="journal article" date="2006" name="PLoS Biol.">
        <title>Two-step recruitment of RNA-directed DNA methylation to tandem repeats.</title>
        <authorList>
            <person name="Chan S.W."/>
            <person name="Zhang X."/>
            <person name="Bernatavichute Y.V."/>
            <person name="Jacobsen S.E."/>
        </authorList>
    </citation>
    <scope>FUNCTION</scope>
    <scope>DISRUPTION PHENOTYPE</scope>
</reference>
<reference key="8">
    <citation type="journal article" date="2007" name="Plant Cell">
        <title>An SNF2 protein associated with nuclear RNA silencing and the spread of a silencing signal between cells in Arabidopsis.</title>
        <authorList>
            <person name="Smith L.M."/>
            <person name="Pontes O."/>
            <person name="Searle I."/>
            <person name="Yelina N."/>
            <person name="Yousafzai F.K."/>
            <person name="Herr A.J."/>
            <person name="Pikaard C.S."/>
            <person name="Baulcombe D.C."/>
        </authorList>
    </citation>
    <scope>FUNCTION</scope>
    <scope>SUBCELLULAR LOCATION</scope>
</reference>
<reference key="9">
    <citation type="journal article" date="2007" name="Proc. Natl. Acad. Sci. U.S.A.">
        <title>Nuclear gene silencing directs reception of long-distance mRNA silencing in Arabidopsis.</title>
        <authorList>
            <person name="Brosnan C.A."/>
            <person name="Mitter N."/>
            <person name="Christie M."/>
            <person name="Smith N.A."/>
            <person name="Waterhouse P.M."/>
            <person name="Carroll B.J."/>
        </authorList>
    </citation>
    <scope>FUNCTION</scope>
</reference>
<reference key="10">
    <citation type="journal article" date="2010" name="PLoS Genet.">
        <title>siRNA-mediated methylation of Arabidopsis telomeres.</title>
        <authorList>
            <person name="Vrbsky J."/>
            <person name="Akimcheva S."/>
            <person name="Watson J.M."/>
            <person name="Turner T.L."/>
            <person name="Daxinger L."/>
            <person name="Vyskot B."/>
            <person name="Aufsatz W."/>
            <person name="Riha K."/>
        </authorList>
    </citation>
    <scope>FUNCTION</scope>
</reference>
<reference key="11">
    <citation type="journal article" date="2011" name="Epigenetics">
        <title>Identification of genes required for de novo DNA methylation in Arabidopsis.</title>
        <authorList>
            <person name="Greenberg M.V."/>
            <person name="Ausin I."/>
            <person name="Chan S.W."/>
            <person name="Cokus S.J."/>
            <person name="Cuperus J.T."/>
            <person name="Feng S."/>
            <person name="Law J.A."/>
            <person name="Chu C."/>
            <person name="Pellegrini M."/>
            <person name="Carrington J.C."/>
            <person name="Jacobsen S.E."/>
        </authorList>
    </citation>
    <scope>FUNCTION</scope>
    <scope>DISRUPTION PHENOTYPE</scope>
</reference>
<reference key="12">
    <citation type="journal article" date="2011" name="PLoS Genet.">
        <title>SHH1, a homeodomain protein required for DNA methylation, as well as RDR2, RDM4, and chromatin remodeling factors, associate with RNA polymerase IV.</title>
        <authorList>
            <person name="Law J.A."/>
            <person name="Vashisht A.A."/>
            <person name="Wohlschlegel J.A."/>
            <person name="Jacobsen S.E."/>
        </authorList>
    </citation>
    <scope>IDENTIFICATION BY MASS SPECTROMETRY</scope>
    <scope>INTERACTION WITH NRPD1</scope>
</reference>
<reference key="13">
    <citation type="journal article" date="2012" name="Mol. Cell">
        <title>In vitro transcription activities of Pol IV, Pol V, and RDR2 reveal coupling of Pol IV and RDR2 for dsRNA synthesis in plant RNA silencing.</title>
        <authorList>
            <person name="Haag J.R."/>
            <person name="Ream T.S."/>
            <person name="Marasco M."/>
            <person name="Nicora C.D."/>
            <person name="Norbeck A.D."/>
            <person name="Pasa-Tolic L."/>
            <person name="Pikaard C.S."/>
        </authorList>
    </citation>
    <scope>FUNCTION</scope>
    <scope>INTERACTION WITH POL IV COMPLEX</scope>
</reference>
<reference key="14">
    <citation type="journal article" date="2013" name="Proc. Natl. Acad. Sci. U.S.A.">
        <title>DTF1 is a core component of RNA-directed DNA methylation and may assist in the recruitment of Pol IV.</title>
        <authorList>
            <person name="Zhang H."/>
            <person name="Ma Z.Y."/>
            <person name="Zeng L."/>
            <person name="Tanaka K."/>
            <person name="Zhang C.J."/>
            <person name="Ma J."/>
            <person name="Bai G."/>
            <person name="Wang P."/>
            <person name="Zhang S.W."/>
            <person name="Liu Z.W."/>
            <person name="Cai T."/>
            <person name="Tang K."/>
            <person name="Liu R."/>
            <person name="Shi X."/>
            <person name="He X.J."/>
            <person name="Zhu J.K."/>
        </authorList>
    </citation>
    <scope>IDENTIFICATION BY MASS SPECTROMETRY</scope>
    <scope>INTERACTION WITH SHH1</scope>
</reference>
<reference key="15">
    <citation type="journal article" date="2015" name="Plant J.">
        <title>JMJ24 binds to RDR2 and is required for the basal level transcription of silenced loci in Arabidopsis.</title>
        <authorList>
            <person name="Deng S."/>
            <person name="Xu J."/>
            <person name="Liu J."/>
            <person name="Kim S.-H."/>
            <person name="Shi S."/>
            <person name="Chua N.-H."/>
        </authorList>
    </citation>
    <scope>DISRUPTION PHENOTYPE</scope>
    <scope>INTERACTION WITH JMJ24</scope>
    <scope>SUBCELLULAR LOCATION</scope>
    <source>
        <strain>cv. Columbia</strain>
    </source>
</reference>
<reference key="16">
    <citation type="journal article" date="2021" name="Proc. Natl. Acad. Sci. U.S.A.">
        <title>Structure and RNA template requirements of Arabidopsis RNA-DEPENDENT RNA POLYMERASE 2.</title>
        <authorList>
            <person name="Fukudome A."/>
            <person name="Singh J."/>
            <person name="Mishra V."/>
            <person name="Reddem E."/>
            <person name="Martinez-Marquez F."/>
            <person name="Wenzel S."/>
            <person name="Yan R."/>
            <person name="Shiozaki M."/>
            <person name="Yu Z."/>
            <person name="Wang J.C.-Y."/>
            <person name="Takagi Y."/>
            <person name="Pikaard C.S."/>
        </authorList>
    </citation>
    <scope>STRUCTURE BY ELECTRON MICROSCOPY (3.10 ANGSTROMS) IN COMPLEX WITH MAGNESIUM</scope>
    <scope>FUNCTION</scope>
</reference>
<reference key="17">
    <citation type="journal article" date="2021" name="Science">
        <title>Pol IV and RDR2: A two-RNA-polymerase machine that produces double-stranded RNA.</title>
        <authorList>
            <person name="Huang K."/>
            <person name="Wu X.-X."/>
            <person name="Fang C.-L."/>
            <person name="Xu Z.-G."/>
            <person name="Zhang H.-W."/>
            <person name="Gao J."/>
            <person name="Zhou C.-M."/>
            <person name="You L.-L."/>
            <person name="Gu Z.-X."/>
            <person name="Mu W.-H."/>
            <person name="Feng Y."/>
            <person name="Wang J.-W."/>
            <person name="Zhang Y."/>
        </authorList>
    </citation>
    <scope>STRUCTURE BY ELECTRON MICROSCOPY (3.16 ANGSTROMS) IN COMPLEX WITH MAGNESIUM AND POL IV</scope>
    <scope>FUNCTION</scope>
    <scope>SUBUNIT</scope>
</reference>
<organism>
    <name type="scientific">Arabidopsis thaliana</name>
    <name type="common">Mouse-ear cress</name>
    <dbReference type="NCBI Taxonomy" id="3702"/>
    <lineage>
        <taxon>Eukaryota</taxon>
        <taxon>Viridiplantae</taxon>
        <taxon>Streptophyta</taxon>
        <taxon>Embryophyta</taxon>
        <taxon>Tracheophyta</taxon>
        <taxon>Spermatophyta</taxon>
        <taxon>Magnoliopsida</taxon>
        <taxon>eudicotyledons</taxon>
        <taxon>Gunneridae</taxon>
        <taxon>Pentapetalae</taxon>
        <taxon>rosids</taxon>
        <taxon>malvids</taxon>
        <taxon>Brassicales</taxon>
        <taxon>Brassicaceae</taxon>
        <taxon>Camelineae</taxon>
        <taxon>Arabidopsis</taxon>
    </lineage>
</organism>
<feature type="chain" id="PRO_0000404673" description="RNA-dependent RNA polymerase 2">
    <location>
        <begin position="1"/>
        <end position="1133"/>
    </location>
</feature>
<feature type="binding site" evidence="14 15 22 23 24">
    <location>
        <position position="830"/>
    </location>
    <ligand>
        <name>Mg(2+)</name>
        <dbReference type="ChEBI" id="CHEBI:18420"/>
    </ligand>
</feature>
<feature type="binding site" evidence="14 15 22 23 24 25">
    <location>
        <position position="832"/>
    </location>
    <ligand>
        <name>Mg(2+)</name>
        <dbReference type="ChEBI" id="CHEBI:18420"/>
    </ligand>
</feature>
<feature type="binding site" evidence="14 15 22 23 24 25">
    <location>
        <position position="834"/>
    </location>
    <ligand>
        <name>Mg(2+)</name>
        <dbReference type="ChEBI" id="CHEBI:18420"/>
    </ligand>
</feature>
<feature type="strand" evidence="27">
    <location>
        <begin position="11"/>
        <end position="14"/>
    </location>
</feature>
<feature type="helix" evidence="27">
    <location>
        <begin position="23"/>
        <end position="33"/>
    </location>
</feature>
<feature type="strand" evidence="27">
    <location>
        <begin position="39"/>
        <end position="43"/>
    </location>
</feature>
<feature type="strand" evidence="26">
    <location>
        <begin position="46"/>
        <end position="51"/>
    </location>
</feature>
<feature type="strand" evidence="27">
    <location>
        <begin position="57"/>
        <end position="63"/>
    </location>
</feature>
<feature type="turn" evidence="27">
    <location>
        <begin position="64"/>
        <end position="69"/>
    </location>
</feature>
<feature type="helix" evidence="27">
    <location>
        <begin position="70"/>
        <end position="76"/>
    </location>
</feature>
<feature type="strand" evidence="26">
    <location>
        <begin position="80"/>
        <end position="83"/>
    </location>
</feature>
<feature type="strand" evidence="26">
    <location>
        <begin position="88"/>
        <end position="90"/>
    </location>
</feature>
<feature type="turn" evidence="27">
    <location>
        <begin position="102"/>
        <end position="104"/>
    </location>
</feature>
<feature type="strand" evidence="27">
    <location>
        <begin position="105"/>
        <end position="114"/>
    </location>
</feature>
<feature type="strand" evidence="27">
    <location>
        <begin position="119"/>
        <end position="125"/>
    </location>
</feature>
<feature type="strand" evidence="27">
    <location>
        <begin position="127"/>
        <end position="137"/>
    </location>
</feature>
<feature type="turn" evidence="27">
    <location>
        <begin position="138"/>
        <end position="141"/>
    </location>
</feature>
<feature type="strand" evidence="27">
    <location>
        <begin position="142"/>
        <end position="147"/>
    </location>
</feature>
<feature type="strand" evidence="27">
    <location>
        <begin position="154"/>
        <end position="158"/>
    </location>
</feature>
<feature type="strand" evidence="27">
    <location>
        <begin position="160"/>
        <end position="169"/>
    </location>
</feature>
<feature type="strand" evidence="26">
    <location>
        <begin position="171"/>
        <end position="173"/>
    </location>
</feature>
<feature type="strand" evidence="28">
    <location>
        <begin position="175"/>
        <end position="177"/>
    </location>
</feature>
<feature type="strand" evidence="27">
    <location>
        <begin position="180"/>
        <end position="187"/>
    </location>
</feature>
<feature type="strand" evidence="27">
    <location>
        <begin position="190"/>
        <end position="195"/>
    </location>
</feature>
<feature type="strand" evidence="26">
    <location>
        <begin position="212"/>
        <end position="214"/>
    </location>
</feature>
<feature type="strand" evidence="27">
    <location>
        <begin position="217"/>
        <end position="221"/>
    </location>
</feature>
<feature type="turn" evidence="27">
    <location>
        <begin position="230"/>
        <end position="233"/>
    </location>
</feature>
<feature type="strand" evidence="27">
    <location>
        <begin position="235"/>
        <end position="240"/>
    </location>
</feature>
<feature type="strand" evidence="27">
    <location>
        <begin position="247"/>
        <end position="251"/>
    </location>
</feature>
<feature type="strand" evidence="27">
    <location>
        <begin position="254"/>
        <end position="257"/>
    </location>
</feature>
<feature type="strand" evidence="27">
    <location>
        <begin position="265"/>
        <end position="268"/>
    </location>
</feature>
<feature type="helix" evidence="27">
    <location>
        <begin position="270"/>
        <end position="272"/>
    </location>
</feature>
<feature type="helix" evidence="26">
    <location>
        <begin position="284"/>
        <end position="287"/>
    </location>
</feature>
<feature type="turn" evidence="27">
    <location>
        <begin position="292"/>
        <end position="295"/>
    </location>
</feature>
<feature type="helix" evidence="27">
    <location>
        <begin position="296"/>
        <end position="304"/>
    </location>
</feature>
<feature type="turn" evidence="26">
    <location>
        <begin position="305"/>
        <end position="307"/>
    </location>
</feature>
<feature type="helix" evidence="27">
    <location>
        <begin position="310"/>
        <end position="314"/>
    </location>
</feature>
<feature type="helix" evidence="27">
    <location>
        <begin position="316"/>
        <end position="324"/>
    </location>
</feature>
<feature type="helix" evidence="27">
    <location>
        <begin position="327"/>
        <end position="339"/>
    </location>
</feature>
<feature type="strand" evidence="27">
    <location>
        <begin position="340"/>
        <end position="342"/>
    </location>
</feature>
<feature type="helix" evidence="27">
    <location>
        <begin position="347"/>
        <end position="356"/>
    </location>
</feature>
<feature type="turn" evidence="27">
    <location>
        <begin position="371"/>
        <end position="375"/>
    </location>
</feature>
<feature type="strand" evidence="27">
    <location>
        <begin position="378"/>
        <end position="386"/>
    </location>
</feature>
<feature type="strand" evidence="27">
    <location>
        <begin position="391"/>
        <end position="400"/>
    </location>
</feature>
<feature type="helix" evidence="27">
    <location>
        <begin position="403"/>
        <end position="407"/>
    </location>
</feature>
<feature type="helix" evidence="27">
    <location>
        <begin position="409"/>
        <end position="414"/>
    </location>
</feature>
<feature type="strand" evidence="27">
    <location>
        <begin position="415"/>
        <end position="421"/>
    </location>
</feature>
<feature type="strand" evidence="27">
    <location>
        <begin position="423"/>
        <end position="427"/>
    </location>
</feature>
<feature type="helix" evidence="27">
    <location>
        <begin position="430"/>
        <end position="433"/>
    </location>
</feature>
<feature type="strand" evidence="26">
    <location>
        <begin position="440"/>
        <end position="446"/>
    </location>
</feature>
<feature type="helix" evidence="27">
    <location>
        <begin position="449"/>
        <end position="460"/>
    </location>
</feature>
<feature type="strand" evidence="27">
    <location>
        <begin position="462"/>
        <end position="464"/>
    </location>
</feature>
<feature type="strand" evidence="27">
    <location>
        <begin position="467"/>
        <end position="473"/>
    </location>
</feature>
<feature type="helix" evidence="27">
    <location>
        <begin position="476"/>
        <end position="481"/>
    </location>
</feature>
<feature type="strand" evidence="27">
    <location>
        <begin position="483"/>
        <end position="488"/>
    </location>
</feature>
<feature type="strand" evidence="27">
    <location>
        <begin position="491"/>
        <end position="493"/>
    </location>
</feature>
<feature type="helix" evidence="27">
    <location>
        <begin position="495"/>
        <end position="502"/>
    </location>
</feature>
<feature type="turn" evidence="27">
    <location>
        <begin position="503"/>
        <end position="505"/>
    </location>
</feature>
<feature type="helix" evidence="27">
    <location>
        <begin position="511"/>
        <end position="520"/>
    </location>
</feature>
<feature type="strand" evidence="27">
    <location>
        <begin position="526"/>
        <end position="530"/>
    </location>
</feature>
<feature type="turn" evidence="27">
    <location>
        <begin position="533"/>
        <end position="535"/>
    </location>
</feature>
<feature type="strand" evidence="26">
    <location>
        <begin position="543"/>
        <end position="546"/>
    </location>
</feature>
<feature type="strand" evidence="27">
    <location>
        <begin position="547"/>
        <end position="549"/>
    </location>
</feature>
<feature type="strand" evidence="27">
    <location>
        <begin position="552"/>
        <end position="560"/>
    </location>
</feature>
<feature type="helix" evidence="27">
    <location>
        <begin position="562"/>
        <end position="572"/>
    </location>
</feature>
<feature type="strand" evidence="27">
    <location>
        <begin position="579"/>
        <end position="583"/>
    </location>
</feature>
<feature type="strand" evidence="27">
    <location>
        <begin position="590"/>
        <end position="594"/>
    </location>
</feature>
<feature type="strand" evidence="26">
    <location>
        <begin position="600"/>
        <end position="604"/>
    </location>
</feature>
<feature type="strand" evidence="26">
    <location>
        <begin position="610"/>
        <end position="612"/>
    </location>
</feature>
<feature type="strand" evidence="27">
    <location>
        <begin position="617"/>
        <end position="623"/>
    </location>
</feature>
<feature type="strand" evidence="28">
    <location>
        <begin position="627"/>
        <end position="631"/>
    </location>
</feature>
<feature type="helix" evidence="27">
    <location>
        <begin position="633"/>
        <end position="642"/>
    </location>
</feature>
<feature type="helix" evidence="27">
    <location>
        <begin position="646"/>
        <end position="661"/>
    </location>
</feature>
<feature type="helix" evidence="27">
    <location>
        <begin position="662"/>
        <end position="664"/>
    </location>
</feature>
<feature type="helix" evidence="27">
    <location>
        <begin position="667"/>
        <end position="670"/>
    </location>
</feature>
<feature type="turn" evidence="27">
    <location>
        <begin position="671"/>
        <end position="677"/>
    </location>
</feature>
<feature type="helix" evidence="27">
    <location>
        <begin position="685"/>
        <end position="691"/>
    </location>
</feature>
<feature type="turn" evidence="27">
    <location>
        <begin position="696"/>
        <end position="698"/>
    </location>
</feature>
<feature type="helix" evidence="27">
    <location>
        <begin position="700"/>
        <end position="719"/>
    </location>
</feature>
<feature type="strand" evidence="27">
    <location>
        <begin position="729"/>
        <end position="732"/>
    </location>
</feature>
<feature type="strand" evidence="28">
    <location>
        <begin position="733"/>
        <end position="735"/>
    </location>
</feature>
<feature type="strand" evidence="27">
    <location>
        <begin position="745"/>
        <end position="751"/>
    </location>
</feature>
<feature type="helix" evidence="27">
    <location>
        <begin position="754"/>
        <end position="758"/>
    </location>
</feature>
<feature type="strand" evidence="27">
    <location>
        <begin position="766"/>
        <end position="774"/>
    </location>
</feature>
<feature type="strand" evidence="27">
    <location>
        <begin position="777"/>
        <end position="785"/>
    </location>
</feature>
<feature type="helix" evidence="26">
    <location>
        <begin position="789"/>
        <end position="791"/>
    </location>
</feature>
<feature type="strand" evidence="27">
    <location>
        <begin position="793"/>
        <end position="797"/>
    </location>
</feature>
<feature type="helix" evidence="27">
    <location>
        <begin position="803"/>
        <end position="806"/>
    </location>
</feature>
<feature type="strand" evidence="27">
    <location>
        <begin position="810"/>
        <end position="814"/>
    </location>
</feature>
<feature type="strand" evidence="27">
    <location>
        <begin position="816"/>
        <end position="820"/>
    </location>
</feature>
<feature type="helix" evidence="27">
    <location>
        <begin position="822"/>
        <end position="825"/>
    </location>
</feature>
<feature type="turn" evidence="27">
    <location>
        <begin position="831"/>
        <end position="833"/>
    </location>
</feature>
<feature type="strand" evidence="27">
    <location>
        <begin position="835"/>
        <end position="839"/>
    </location>
</feature>
<feature type="turn" evidence="27">
    <location>
        <begin position="842"/>
        <end position="844"/>
    </location>
</feature>
<feature type="strand" evidence="26">
    <location>
        <begin position="863"/>
        <end position="865"/>
    </location>
</feature>
<feature type="helix" evidence="27">
    <location>
        <begin position="869"/>
        <end position="881"/>
    </location>
</feature>
<feature type="helix" evidence="27">
    <location>
        <begin position="885"/>
        <end position="896"/>
    </location>
</feature>
<feature type="strand" evidence="27">
    <location>
        <begin position="899"/>
        <end position="905"/>
    </location>
</feature>
<feature type="helix" evidence="27">
    <location>
        <begin position="906"/>
        <end position="920"/>
    </location>
</feature>
<feature type="turn" evidence="27">
    <location>
        <begin position="921"/>
        <end position="923"/>
    </location>
</feature>
<feature type="strand" evidence="27">
    <location>
        <begin position="937"/>
        <end position="943"/>
    </location>
</feature>
<feature type="strand" evidence="27">
    <location>
        <begin position="946"/>
        <end position="948"/>
    </location>
</feature>
<feature type="turn" evidence="27">
    <location>
        <begin position="954"/>
        <end position="958"/>
    </location>
</feature>
<feature type="helix" evidence="27">
    <location>
        <begin position="959"/>
        <end position="968"/>
    </location>
</feature>
<feature type="helix" evidence="27">
    <location>
        <begin position="982"/>
        <end position="988"/>
    </location>
</feature>
<feature type="helix" evidence="27">
    <location>
        <begin position="999"/>
        <end position="1016"/>
    </location>
</feature>
<feature type="turn" evidence="27">
    <location>
        <begin position="1025"/>
        <end position="1028"/>
    </location>
</feature>
<feature type="turn" evidence="26">
    <location>
        <begin position="1037"/>
        <end position="1039"/>
    </location>
</feature>
<feature type="helix" evidence="27">
    <location>
        <begin position="1049"/>
        <end position="1052"/>
    </location>
</feature>
<feature type="turn" evidence="27">
    <location>
        <begin position="1053"/>
        <end position="1055"/>
    </location>
</feature>
<feature type="helix" evidence="27">
    <location>
        <begin position="1056"/>
        <end position="1066"/>
    </location>
</feature>
<feature type="turn" evidence="27">
    <location>
        <begin position="1075"/>
        <end position="1077"/>
    </location>
</feature>
<feature type="helix" evidence="27">
    <location>
        <begin position="1078"/>
        <end position="1088"/>
    </location>
</feature>
<feature type="turn" evidence="27">
    <location>
        <begin position="1089"/>
        <end position="1094"/>
    </location>
</feature>
<feature type="helix" evidence="27">
    <location>
        <begin position="1102"/>
        <end position="1105"/>
    </location>
</feature>
<feature type="helix" evidence="27">
    <location>
        <begin position="1107"/>
        <end position="1120"/>
    </location>
</feature>
<dbReference type="EC" id="2.7.7.48"/>
<dbReference type="EMBL" id="AF080120">
    <property type="protein sequence ID" value="AAC35535.1"/>
    <property type="molecule type" value="Genomic_DNA"/>
</dbReference>
<dbReference type="EMBL" id="AL049876">
    <property type="protein sequence ID" value="CAB43048.1"/>
    <property type="molecule type" value="Genomic_DNA"/>
</dbReference>
<dbReference type="EMBL" id="AL161531">
    <property type="protein sequence ID" value="CAB81214.1"/>
    <property type="molecule type" value="Genomic_DNA"/>
</dbReference>
<dbReference type="EMBL" id="CP002687">
    <property type="protein sequence ID" value="AEE82976.1"/>
    <property type="molecule type" value="Genomic_DNA"/>
</dbReference>
<dbReference type="PIR" id="T01920">
    <property type="entry name" value="T01920"/>
</dbReference>
<dbReference type="RefSeq" id="NP_192851.1">
    <property type="nucleotide sequence ID" value="NM_117183.3"/>
</dbReference>
<dbReference type="PDB" id="7EU0">
    <property type="method" value="EM"/>
    <property type="resolution" value="3.16 A"/>
    <property type="chains" value="M=1-1133"/>
</dbReference>
<dbReference type="PDB" id="7EU1">
    <property type="method" value="EM"/>
    <property type="resolution" value="3.86 A"/>
    <property type="chains" value="M=1-1133"/>
</dbReference>
<dbReference type="PDB" id="7ROZ">
    <property type="method" value="EM"/>
    <property type="resolution" value="3.10 A"/>
    <property type="chains" value="A=1-1133"/>
</dbReference>
<dbReference type="PDB" id="7RQS">
    <property type="method" value="EM"/>
    <property type="resolution" value="3.57 A"/>
    <property type="chains" value="A=1-1133"/>
</dbReference>
<dbReference type="PDB" id="8XMB">
    <property type="method" value="EM"/>
    <property type="resolution" value="3.40 A"/>
    <property type="chains" value="M=1-1133"/>
</dbReference>
<dbReference type="PDB" id="8XMC">
    <property type="method" value="EM"/>
    <property type="resolution" value="3.10 A"/>
    <property type="chains" value="M=1-1133"/>
</dbReference>
<dbReference type="PDB" id="8XMD">
    <property type="method" value="EM"/>
    <property type="resolution" value="3.40 A"/>
    <property type="chains" value="M=1-1133"/>
</dbReference>
<dbReference type="PDB" id="8XME">
    <property type="method" value="EM"/>
    <property type="resolution" value="3.10 A"/>
    <property type="chains" value="M=1-1133"/>
</dbReference>
<dbReference type="PDBsum" id="7EU0"/>
<dbReference type="PDBsum" id="7EU1"/>
<dbReference type="PDBsum" id="7ROZ"/>
<dbReference type="PDBsum" id="7RQS"/>
<dbReference type="PDBsum" id="8XMB"/>
<dbReference type="PDBsum" id="8XMC"/>
<dbReference type="PDBsum" id="8XMD"/>
<dbReference type="PDBsum" id="8XME"/>
<dbReference type="EMDB" id="EMD-24610"/>
<dbReference type="EMDB" id="EMD-24635"/>
<dbReference type="EMDB" id="EMD-31305"/>
<dbReference type="EMDB" id="EMD-31306"/>
<dbReference type="EMDB" id="EMD-38470"/>
<dbReference type="EMDB" id="EMD-38471"/>
<dbReference type="EMDB" id="EMD-38472"/>
<dbReference type="EMDB" id="EMD-38473"/>
<dbReference type="SMR" id="O82504"/>
<dbReference type="BioGRID" id="12013">
    <property type="interactions" value="4"/>
</dbReference>
<dbReference type="FunCoup" id="O82504">
    <property type="interactions" value="274"/>
</dbReference>
<dbReference type="STRING" id="3702.O82504"/>
<dbReference type="GlyGen" id="O82504">
    <property type="glycosylation" value="1 site"/>
</dbReference>
<dbReference type="iPTMnet" id="O82504"/>
<dbReference type="PaxDb" id="3702-AT4G11130.1"/>
<dbReference type="ProteomicsDB" id="235077"/>
<dbReference type="EnsemblPlants" id="AT4G11130.1">
    <property type="protein sequence ID" value="AT4G11130.1"/>
    <property type="gene ID" value="AT4G11130"/>
</dbReference>
<dbReference type="GeneID" id="826714"/>
<dbReference type="Gramene" id="AT4G11130.1">
    <property type="protein sequence ID" value="AT4G11130.1"/>
    <property type="gene ID" value="AT4G11130"/>
</dbReference>
<dbReference type="KEGG" id="ath:AT4G11130"/>
<dbReference type="Araport" id="AT4G11130"/>
<dbReference type="TAIR" id="AT4G11130">
    <property type="gene designation" value="RDR2"/>
</dbReference>
<dbReference type="eggNOG" id="KOG0988">
    <property type="taxonomic scope" value="Eukaryota"/>
</dbReference>
<dbReference type="HOGENOM" id="CLU_001366_3_0_1"/>
<dbReference type="InParanoid" id="O82504"/>
<dbReference type="OMA" id="YHICKED"/>
<dbReference type="PhylomeDB" id="O82504"/>
<dbReference type="BRENDA" id="2.7.7.48">
    <property type="organism ID" value="399"/>
</dbReference>
<dbReference type="PRO" id="PR:O82504"/>
<dbReference type="Proteomes" id="UP000006548">
    <property type="component" value="Chromosome 4"/>
</dbReference>
<dbReference type="ExpressionAtlas" id="O82504">
    <property type="expression patterns" value="baseline and differential"/>
</dbReference>
<dbReference type="GO" id="GO:0005730">
    <property type="term" value="C:nucleolus"/>
    <property type="evidence" value="ECO:0000314"/>
    <property type="project" value="TAIR"/>
</dbReference>
<dbReference type="GO" id="GO:0005654">
    <property type="term" value="C:nucleoplasm"/>
    <property type="evidence" value="ECO:0007669"/>
    <property type="project" value="UniProtKB-SubCell"/>
</dbReference>
<dbReference type="GO" id="GO:0005634">
    <property type="term" value="C:nucleus"/>
    <property type="evidence" value="ECO:0000314"/>
    <property type="project" value="TAIR"/>
</dbReference>
<dbReference type="GO" id="GO:0071667">
    <property type="term" value="F:DNA/RNA hybrid binding"/>
    <property type="evidence" value="ECO:0000314"/>
    <property type="project" value="UniProtKB"/>
</dbReference>
<dbReference type="GO" id="GO:0046872">
    <property type="term" value="F:metal ion binding"/>
    <property type="evidence" value="ECO:0007669"/>
    <property type="project" value="UniProtKB-KW"/>
</dbReference>
<dbReference type="GO" id="GO:0003968">
    <property type="term" value="F:RNA-directed RNA polymerase activity"/>
    <property type="evidence" value="ECO:0000314"/>
    <property type="project" value="UniProtKB"/>
</dbReference>
<dbReference type="GO" id="GO:0003727">
    <property type="term" value="F:single-stranded RNA binding"/>
    <property type="evidence" value="ECO:0000314"/>
    <property type="project" value="UniProtKB"/>
</dbReference>
<dbReference type="GO" id="GO:0050832">
    <property type="term" value="P:defense response to fungus"/>
    <property type="evidence" value="ECO:0000315"/>
    <property type="project" value="TAIR"/>
</dbReference>
<dbReference type="GO" id="GO:0030422">
    <property type="term" value="P:siRNA processing"/>
    <property type="evidence" value="ECO:0000315"/>
    <property type="project" value="TAIR"/>
</dbReference>
<dbReference type="GO" id="GO:0140745">
    <property type="term" value="P:siRNA transcription"/>
    <property type="evidence" value="ECO:0000314"/>
    <property type="project" value="UniProtKB"/>
</dbReference>
<dbReference type="GO" id="GO:0010495">
    <property type="term" value="P:siRNA-mediated long-distance post-transcriptional gene silencing"/>
    <property type="evidence" value="ECO:0000315"/>
    <property type="project" value="UniProtKB"/>
</dbReference>
<dbReference type="InterPro" id="IPR007855">
    <property type="entry name" value="RNA-dep_RNA_pol_euk-typ"/>
</dbReference>
<dbReference type="PANTHER" id="PTHR23079">
    <property type="entry name" value="RNA-DEPENDENT RNA POLYMERASE"/>
    <property type="match status" value="1"/>
</dbReference>
<dbReference type="PANTHER" id="PTHR23079:SF5">
    <property type="entry name" value="RNA-DEPENDENT RNA POLYMERASE 2"/>
    <property type="match status" value="1"/>
</dbReference>
<dbReference type="Pfam" id="PF24823">
    <property type="entry name" value="PH_RDR2"/>
    <property type="match status" value="1"/>
</dbReference>
<dbReference type="Pfam" id="PF05183">
    <property type="entry name" value="RdRP"/>
    <property type="match status" value="1"/>
</dbReference>
<protein>
    <recommendedName>
        <fullName evidence="16 17">RNA-dependent RNA polymerase 2</fullName>
        <shortName evidence="16 17">AtRDRP2</shortName>
        <ecNumber>2.7.7.48</ecNumber>
    </recommendedName>
    <alternativeName>
        <fullName>Protein SILENCING MOVEMENT DEFICIENT 1</fullName>
    </alternativeName>
    <alternativeName>
        <fullName evidence="16 17">RNA-directed RNA polymerase 2</fullName>
    </alternativeName>
</protein>
<evidence type="ECO:0000269" key="1">
    <source>
    </source>
</evidence>
<evidence type="ECO:0000269" key="2">
    <source>
    </source>
</evidence>
<evidence type="ECO:0000269" key="3">
    <source>
    </source>
</evidence>
<evidence type="ECO:0000269" key="4">
    <source>
    </source>
</evidence>
<evidence type="ECO:0000269" key="5">
    <source>
    </source>
</evidence>
<evidence type="ECO:0000269" key="6">
    <source>
    </source>
</evidence>
<evidence type="ECO:0000269" key="7">
    <source>
    </source>
</evidence>
<evidence type="ECO:0000269" key="8">
    <source>
    </source>
</evidence>
<evidence type="ECO:0000269" key="9">
    <source>
    </source>
</evidence>
<evidence type="ECO:0000269" key="10">
    <source>
    </source>
</evidence>
<evidence type="ECO:0000269" key="11">
    <source>
    </source>
</evidence>
<evidence type="ECO:0000269" key="12">
    <source>
    </source>
</evidence>
<evidence type="ECO:0000269" key="13">
    <source>
    </source>
</evidence>
<evidence type="ECO:0000269" key="14">
    <source>
    </source>
</evidence>
<evidence type="ECO:0000269" key="15">
    <source>
    </source>
</evidence>
<evidence type="ECO:0000303" key="16">
    <source>
    </source>
</evidence>
<evidence type="ECO:0000303" key="17">
    <source>
    </source>
</evidence>
<evidence type="ECO:0000305" key="18"/>
<evidence type="ECO:0000305" key="19">
    <source>
    </source>
</evidence>
<evidence type="ECO:0000312" key="20">
    <source>
        <dbReference type="Araport" id="AT4G11130"/>
    </source>
</evidence>
<evidence type="ECO:0000312" key="21">
    <source>
        <dbReference type="EMBL" id="AAC35535.1"/>
    </source>
</evidence>
<evidence type="ECO:0007744" key="22">
    <source>
        <dbReference type="PDB" id="7EU0"/>
    </source>
</evidence>
<evidence type="ECO:0007744" key="23">
    <source>
        <dbReference type="PDB" id="7EU1"/>
    </source>
</evidence>
<evidence type="ECO:0007744" key="24">
    <source>
        <dbReference type="PDB" id="7ROZ"/>
    </source>
</evidence>
<evidence type="ECO:0007744" key="25">
    <source>
        <dbReference type="PDB" id="7RQS"/>
    </source>
</evidence>
<evidence type="ECO:0007829" key="26">
    <source>
        <dbReference type="PDB" id="7EU0"/>
    </source>
</evidence>
<evidence type="ECO:0007829" key="27">
    <source>
        <dbReference type="PDB" id="7ROZ"/>
    </source>
</evidence>
<evidence type="ECO:0007829" key="28">
    <source>
        <dbReference type="PDB" id="8XMD"/>
    </source>
</evidence>
<proteinExistence type="evidence at protein level"/>
<comment type="function">
    <text evidence="1 2 3 5 6 7 8 9 11 14 15">RNA-dependent direct polymerase involved in the production of small interfering RNAs (siRNAs). Binds to single-stranded RNA (ssRNA); engages ssRNAs longer than 7 nucleotides and initiates internal to their 3' ends (PubMed:34903670). Able to transcribe the RNA of an RNA/DNA hybrid, the transcript produced by Pol IV, if its 3' end is accessible, to generate double-stranded small interfering RNAs (dsRNAs) precursor essential for establishing and maintaining DNA methylation (PubMed:34903670, PubMed:34941388). Required for the biogenesis of endogenous siRNAs of 24 nucleotide which derive from heterochromatin and DNA repeats such as transposons or endogenous gene tandem repeats, such as repeats present in FWA gene. Involved in transcriptional gene silencing (TGS). Component of the RNA-directed DNA methylation (RdDM) silencing pathway that utilizes siRNAs to guide DNA methyltransferases to asymmetric cytosines. Involved in control of flowering time through RdDM of FWA locus. Required for reception of long-distance mRNA silencing in the shoot. Required for the formation of telomeric siRNAs and the RNA-dependent DNA methylation of asymmetric cytosines in telomeric (5'-CCCTAAA-3') repeats.</text>
</comment>
<comment type="catalytic activity">
    <reaction>
        <text>RNA(n) + a ribonucleoside 5'-triphosphate = RNA(n+1) + diphosphate</text>
        <dbReference type="Rhea" id="RHEA:21248"/>
        <dbReference type="Rhea" id="RHEA-COMP:14527"/>
        <dbReference type="Rhea" id="RHEA-COMP:17342"/>
        <dbReference type="ChEBI" id="CHEBI:33019"/>
        <dbReference type="ChEBI" id="CHEBI:61557"/>
        <dbReference type="ChEBI" id="CHEBI:140395"/>
        <dbReference type="EC" id="2.7.7.48"/>
    </reaction>
</comment>
<comment type="subunit">
    <text evidence="10 11 12 13 15">Interacts with NRPD1 and SHH1. Associates with Pol IV complex, forming an interpolymerase channel bridging their active sites, through which the Pol IV-generated transcript is handed over to the RDR2 active site after being backtracked, where it is used as the template for double-stranded RNA (dsRNA) synthesis (PubMed:34941388). Interacts with JMJ24 (PubMed:26119694).</text>
</comment>
<comment type="subcellular location">
    <subcellularLocation>
        <location evidence="4 6">Nucleus</location>
        <location evidence="4 6">Nucleoplasm</location>
    </subcellularLocation>
    <subcellularLocation>
        <location evidence="4 6">Nucleus</location>
        <location evidence="4 6">Nucleolus</location>
    </subcellularLocation>
    <subcellularLocation>
        <location evidence="13">Nucleus</location>
    </subcellularLocation>
    <text evidence="4 6">In the nucleolus, localized in a ring or crescent around the inner periphery and to a distinctive nucleolar dot.</text>
</comment>
<comment type="disruption phenotype">
    <text evidence="5 9 13">Late flowering and absence of siRNAs derived from FWA tandem repeat regions. Loss of de novo methylation. Increased expression of retrotransposon-derived solo long terminal repeat (solo LTR) and SDC due to their derepression; levels are even higher in the double mutant rdr2-1 jmj24-1 (PubMed:26119694).</text>
</comment>
<comment type="miscellaneous">
    <text evidence="19">RDR2 is non-functional in the absence of associated Pol IV.</text>
</comment>
<comment type="similarity">
    <text evidence="18">Belongs to the RdRP family.</text>
</comment>